<organism>
    <name type="scientific">Halobacterium salinarum (strain ATCC 29341 / DSM 671 / R1)</name>
    <dbReference type="NCBI Taxonomy" id="478009"/>
    <lineage>
        <taxon>Archaea</taxon>
        <taxon>Methanobacteriati</taxon>
        <taxon>Methanobacteriota</taxon>
        <taxon>Stenosarchaea group</taxon>
        <taxon>Halobacteria</taxon>
        <taxon>Halobacteriales</taxon>
        <taxon>Halobacteriaceae</taxon>
        <taxon>Halobacterium</taxon>
        <taxon>Halobacterium salinarum NRC-34001</taxon>
    </lineage>
</organism>
<accession>B0R668</accession>
<reference key="1">
    <citation type="journal article" date="2008" name="Genomics">
        <title>Evolution in the laboratory: the genome of Halobacterium salinarum strain R1 compared to that of strain NRC-1.</title>
        <authorList>
            <person name="Pfeiffer F."/>
            <person name="Schuster S.C."/>
            <person name="Broicher A."/>
            <person name="Falb M."/>
            <person name="Palm P."/>
            <person name="Rodewald K."/>
            <person name="Ruepp A."/>
            <person name="Soppa J."/>
            <person name="Tittor J."/>
            <person name="Oesterhelt D."/>
        </authorList>
    </citation>
    <scope>NUCLEOTIDE SEQUENCE [LARGE SCALE GENOMIC DNA]</scope>
    <source>
        <strain>ATCC 29341 / DSM 671 / R1</strain>
    </source>
</reference>
<comment type="similarity">
    <text evidence="1">Belongs to the eukaryotic ribosomal protein eS4 family.</text>
</comment>
<proteinExistence type="inferred from homology"/>
<keyword id="KW-0687">Ribonucleoprotein</keyword>
<keyword id="KW-0689">Ribosomal protein</keyword>
<keyword id="KW-0694">RNA-binding</keyword>
<keyword id="KW-0699">rRNA-binding</keyword>
<gene>
    <name evidence="1" type="primary">rps4e</name>
    <name type="ordered locus">OE_3405F</name>
</gene>
<evidence type="ECO:0000255" key="1">
    <source>
        <dbReference type="HAMAP-Rule" id="MF_00485"/>
    </source>
</evidence>
<evidence type="ECO:0000305" key="2"/>
<name>RS4E_HALS3</name>
<dbReference type="EMBL" id="AM774415">
    <property type="protein sequence ID" value="CAP14237.1"/>
    <property type="molecule type" value="Genomic_DNA"/>
</dbReference>
<dbReference type="RefSeq" id="WP_010903246.1">
    <property type="nucleotide sequence ID" value="NC_010364.1"/>
</dbReference>
<dbReference type="SMR" id="B0R668"/>
<dbReference type="EnsemblBacteria" id="CAP14237">
    <property type="protein sequence ID" value="CAP14237"/>
    <property type="gene ID" value="OE_3405F"/>
</dbReference>
<dbReference type="KEGG" id="hsl:OE_3405F"/>
<dbReference type="HOGENOM" id="CLU_060400_0_0_2"/>
<dbReference type="PhylomeDB" id="B0R668"/>
<dbReference type="Proteomes" id="UP000001321">
    <property type="component" value="Chromosome"/>
</dbReference>
<dbReference type="GO" id="GO:0022627">
    <property type="term" value="C:cytosolic small ribosomal subunit"/>
    <property type="evidence" value="ECO:0007669"/>
    <property type="project" value="TreeGrafter"/>
</dbReference>
<dbReference type="GO" id="GO:0019843">
    <property type="term" value="F:rRNA binding"/>
    <property type="evidence" value="ECO:0007669"/>
    <property type="project" value="UniProtKB-KW"/>
</dbReference>
<dbReference type="GO" id="GO:0003735">
    <property type="term" value="F:structural constituent of ribosome"/>
    <property type="evidence" value="ECO:0007669"/>
    <property type="project" value="InterPro"/>
</dbReference>
<dbReference type="GO" id="GO:0006412">
    <property type="term" value="P:translation"/>
    <property type="evidence" value="ECO:0007669"/>
    <property type="project" value="UniProtKB-UniRule"/>
</dbReference>
<dbReference type="CDD" id="cd06087">
    <property type="entry name" value="KOW_RPS4"/>
    <property type="match status" value="1"/>
</dbReference>
<dbReference type="FunFam" id="3.10.290.10:FF:000059">
    <property type="entry name" value="30S ribosomal protein S4e"/>
    <property type="match status" value="1"/>
</dbReference>
<dbReference type="Gene3D" id="2.30.30.30">
    <property type="match status" value="1"/>
</dbReference>
<dbReference type="Gene3D" id="2.40.50.740">
    <property type="match status" value="1"/>
</dbReference>
<dbReference type="Gene3D" id="3.10.290.10">
    <property type="entry name" value="RNA-binding S4 domain"/>
    <property type="match status" value="1"/>
</dbReference>
<dbReference type="HAMAP" id="MF_00485">
    <property type="entry name" value="Ribosomal_eS4"/>
    <property type="match status" value="1"/>
</dbReference>
<dbReference type="InterPro" id="IPR014722">
    <property type="entry name" value="Rib_uL2_dom2"/>
</dbReference>
<dbReference type="InterPro" id="IPR000876">
    <property type="entry name" value="Ribosomal_eS4"/>
</dbReference>
<dbReference type="InterPro" id="IPR013845">
    <property type="entry name" value="Ribosomal_eS4_central_region"/>
</dbReference>
<dbReference type="InterPro" id="IPR038237">
    <property type="entry name" value="Ribosomal_eS4_central_sf"/>
</dbReference>
<dbReference type="InterPro" id="IPR041982">
    <property type="entry name" value="Ribosomal_eS4_KOW"/>
</dbReference>
<dbReference type="InterPro" id="IPR013843">
    <property type="entry name" value="Ribosomal_eS4_N"/>
</dbReference>
<dbReference type="InterPro" id="IPR018199">
    <property type="entry name" value="Ribosomal_eS4_N_CS"/>
</dbReference>
<dbReference type="InterPro" id="IPR036986">
    <property type="entry name" value="S4_RNA-bd_sf"/>
</dbReference>
<dbReference type="NCBIfam" id="NF003312">
    <property type="entry name" value="PRK04313.1"/>
    <property type="match status" value="1"/>
</dbReference>
<dbReference type="PANTHER" id="PTHR11581">
    <property type="entry name" value="30S/40S RIBOSOMAL PROTEIN S4"/>
    <property type="match status" value="1"/>
</dbReference>
<dbReference type="PANTHER" id="PTHR11581:SF0">
    <property type="entry name" value="SMALL RIBOSOMAL SUBUNIT PROTEIN ES4"/>
    <property type="match status" value="1"/>
</dbReference>
<dbReference type="Pfam" id="PF00900">
    <property type="entry name" value="Ribosomal_S4e"/>
    <property type="match status" value="1"/>
</dbReference>
<dbReference type="Pfam" id="PF08071">
    <property type="entry name" value="RS4NT"/>
    <property type="match status" value="1"/>
</dbReference>
<dbReference type="PIRSF" id="PIRSF002116">
    <property type="entry name" value="Ribosomal_S4"/>
    <property type="match status" value="1"/>
</dbReference>
<dbReference type="PROSITE" id="PS00528">
    <property type="entry name" value="RIBOSOMAL_S4E"/>
    <property type="match status" value="1"/>
</dbReference>
<dbReference type="PROSITE" id="PS50889">
    <property type="entry name" value="S4"/>
    <property type="match status" value="1"/>
</dbReference>
<sequence length="233" mass="25023">MTNHQKRLSVPKSWPVERKTETFTAKAGAGPHGESGVPLVVVLRDVLEYVDDTSEAQYAINTDGVLVNGDSVGDVNRPIGMFDILAFPDRDEYYRVFPDEGGRLGLTEIDADAAGSKLNKVTDKTTVSGGRTQLNFHDGSNLALDEDAYAGGDSVVVDTDTNEIVAHFQYEEGALVTAVAGQHAGDIGEIAEINVQPGSASNTVRVDDENGGFETIAEYVVVIDENFVEEDDE</sequence>
<feature type="chain" id="PRO_1000126116" description="Small ribosomal subunit protein eS4">
    <location>
        <begin position="1"/>
        <end position="233"/>
    </location>
</feature>
<feature type="domain" description="S4 RNA-binding" evidence="1">
    <location>
        <begin position="37"/>
        <end position="99"/>
    </location>
</feature>
<protein>
    <recommendedName>
        <fullName evidence="1">Small ribosomal subunit protein eS4</fullName>
    </recommendedName>
    <alternativeName>
        <fullName evidence="2">30S ribosomal protein S4e</fullName>
    </alternativeName>
</protein>